<evidence type="ECO:0000255" key="1">
    <source>
        <dbReference type="PROSITE-ProRule" id="PRU01185"/>
    </source>
</evidence>
<evidence type="ECO:0000256" key="2">
    <source>
        <dbReference type="SAM" id="MobiDB-lite"/>
    </source>
</evidence>
<evidence type="ECO:0000269" key="3">
    <source>
    </source>
</evidence>
<evidence type="ECO:0000269" key="4">
    <source>
    </source>
</evidence>
<evidence type="ECO:0000269" key="5">
    <source>
    </source>
</evidence>
<evidence type="ECO:0000269" key="6">
    <source>
    </source>
</evidence>
<evidence type="ECO:0000269" key="7">
    <source>
    </source>
</evidence>
<evidence type="ECO:0000269" key="8">
    <source>
    </source>
</evidence>
<evidence type="ECO:0000269" key="9">
    <source>
    </source>
</evidence>
<evidence type="ECO:0000269" key="10">
    <source>
    </source>
</evidence>
<evidence type="ECO:0000269" key="11">
    <source>
    </source>
</evidence>
<evidence type="ECO:0000269" key="12">
    <source>
    </source>
</evidence>
<evidence type="ECO:0000269" key="13">
    <source>
    </source>
</evidence>
<evidence type="ECO:0000269" key="14">
    <source>
    </source>
</evidence>
<evidence type="ECO:0000305" key="15"/>
<evidence type="ECO:0007829" key="16">
    <source>
        <dbReference type="PDB" id="4LCT"/>
    </source>
</evidence>
<protein>
    <recommendedName>
        <fullName>COP9 signalosome complex subunit 1</fullName>
        <shortName>CSN complex subunit 1</shortName>
    </recommendedName>
    <alternativeName>
        <fullName>Constitutive photomorphogenesis protein 11</fullName>
    </alternativeName>
    <alternativeName>
        <fullName>Protein FUSCA 6</fullName>
    </alternativeName>
</protein>
<feature type="chain" id="PRO_0000120965" description="COP9 signalosome complex subunit 1">
    <location>
        <begin position="1"/>
        <end position="441"/>
    </location>
</feature>
<feature type="domain" description="PCI" evidence="1">
    <location>
        <begin position="230"/>
        <end position="400"/>
    </location>
</feature>
<feature type="region of interest" description="Disordered" evidence="2">
    <location>
        <begin position="1"/>
        <end position="28"/>
    </location>
</feature>
<feature type="mutagenesis site" description="In fus6-T236; abolishes the interaction with CSN2 and CSN4.">
    <original>G</original>
    <variation>R</variation>
    <location>
        <position position="222"/>
    </location>
</feature>
<feature type="mutagenesis site" description="Abolishes the interaction with CSN7." evidence="11">
    <original>F</original>
    <variation>A</variation>
    <location>
        <position position="350"/>
    </location>
</feature>
<feature type="mutagenesis site" description="No effect on the interaction with CSN7." evidence="11">
    <original>M</original>
    <variation>Q</variation>
    <location>
        <position position="358"/>
    </location>
</feature>
<feature type="mutagenesis site" description="Abolishes the interaction with CSN7." evidence="11">
    <original>L</original>
    <variation>D</variation>
    <location>
        <position position="373"/>
    </location>
</feature>
<feature type="mutagenesis site" description="No effect on the interaction with CSN7." evidence="11">
    <original>I</original>
    <variation>D</variation>
    <location>
        <position position="377"/>
    </location>
</feature>
<feature type="mutagenesis site" description="No effect on the interaction with CSN7." evidence="11">
    <original>R</original>
    <variation>D</variation>
    <location>
        <position position="385"/>
    </location>
</feature>
<feature type="mutagenesis site" description="Strongly reduced interaction with CSN7." evidence="11">
    <original>D</original>
    <variation>L</variation>
    <location>
        <position position="387"/>
    </location>
</feature>
<feature type="mutagenesis site" description="No effect on the interaction with CSN7." evidence="11">
    <original>N</original>
    <variation>A</variation>
    <location>
        <position position="390"/>
    </location>
</feature>
<feature type="sequence conflict" description="In Ref. 5; BAC42193." evidence="15" ref="5">
    <original>D</original>
    <variation>G</variation>
    <location>
        <position position="4"/>
    </location>
</feature>
<feature type="sequence conflict" description="In Ref. 1; AAA32792." evidence="15" ref="1">
    <original>S</original>
    <variation>G</variation>
    <location>
        <position position="8"/>
    </location>
</feature>
<feature type="sequence conflict" description="In Ref. 5; BAC42193." evidence="15" ref="5">
    <original>L</original>
    <variation>F</variation>
    <location>
        <position position="133"/>
    </location>
</feature>
<feature type="sequence conflict" description="In Ref. 3; CAB71044." evidence="15" ref="3">
    <original>QKV</original>
    <variation>AF</variation>
    <location>
        <begin position="277"/>
        <end position="279"/>
    </location>
</feature>
<feature type="helix" evidence="16">
    <location>
        <begin position="36"/>
        <end position="41"/>
    </location>
</feature>
<feature type="helix" evidence="16">
    <location>
        <begin position="46"/>
        <end position="57"/>
    </location>
</feature>
<feature type="helix" evidence="16">
    <location>
        <begin position="63"/>
        <end position="77"/>
    </location>
</feature>
<feature type="helix" evidence="16">
    <location>
        <begin position="83"/>
        <end position="93"/>
    </location>
</feature>
<feature type="turn" evidence="16">
    <location>
        <begin position="94"/>
        <end position="97"/>
    </location>
</feature>
<feature type="helix" evidence="16">
    <location>
        <begin position="99"/>
        <end position="101"/>
    </location>
</feature>
<feature type="helix" evidence="16">
    <location>
        <begin position="105"/>
        <end position="131"/>
    </location>
</feature>
<feature type="helix" evidence="16">
    <location>
        <begin position="135"/>
        <end position="152"/>
    </location>
</feature>
<feature type="helix" evidence="16">
    <location>
        <begin position="155"/>
        <end position="164"/>
    </location>
</feature>
<feature type="helix" evidence="16">
    <location>
        <begin position="165"/>
        <end position="168"/>
    </location>
</feature>
<feature type="helix" evidence="16">
    <location>
        <begin position="172"/>
        <end position="188"/>
    </location>
</feature>
<feature type="helix" evidence="16">
    <location>
        <begin position="192"/>
        <end position="203"/>
    </location>
</feature>
<feature type="helix" evidence="16">
    <location>
        <begin position="211"/>
        <end position="227"/>
    </location>
</feature>
<feature type="helix" evidence="16">
    <location>
        <begin position="231"/>
        <end position="239"/>
    </location>
</feature>
<feature type="helix" evidence="16">
    <location>
        <begin position="243"/>
        <end position="245"/>
    </location>
</feature>
<feature type="turn" evidence="16">
    <location>
        <begin position="246"/>
        <end position="252"/>
    </location>
</feature>
<feature type="helix" evidence="16">
    <location>
        <begin position="255"/>
        <end position="269"/>
    </location>
</feature>
<feature type="helix" evidence="16">
    <location>
        <begin position="272"/>
        <end position="278"/>
    </location>
</feature>
<feature type="helix" evidence="16">
    <location>
        <begin position="283"/>
        <end position="290"/>
    </location>
</feature>
<feature type="helix" evidence="16">
    <location>
        <begin position="293"/>
        <end position="303"/>
    </location>
</feature>
<feature type="helix" evidence="16">
    <location>
        <begin position="307"/>
        <end position="322"/>
    </location>
</feature>
<feature type="turn" evidence="16">
    <location>
        <begin position="325"/>
        <end position="327"/>
    </location>
</feature>
<feature type="helix" evidence="16">
    <location>
        <begin position="328"/>
        <end position="330"/>
    </location>
</feature>
<feature type="helix" evidence="16">
    <location>
        <begin position="331"/>
        <end position="347"/>
    </location>
</feature>
<feature type="helix" evidence="16">
    <location>
        <begin position="355"/>
        <end position="361"/>
    </location>
</feature>
<feature type="helix" evidence="16">
    <location>
        <begin position="366"/>
        <end position="378"/>
    </location>
</feature>
<sequence>MERDEEASGPMMEMCTNGGEETSNRRPIISGEPLDIEAYAALYKGRTKIMRLLFIANHCGGNHALQFDALRMAYDEIKKGENTQLFREVVNKIGNRLGEKYGMDLAWCEAVDRRAEQKKVKLENELSSYRTNLIKESIRMGYNDFGDFYYACGMLGDAFKNYIRTRDYCTTTKHIIHMCMNAILVSIEMGQFTHVTSYVNKAEQNPETLEPMVNAKLRCASGLAHLELKKYKLAARKFLDVNPELGNSYNEVIAPQDIATYGGLCALASFDRSELKQKVIDNINFRNFLELVPDVRELINDFYSSRYASCLEYLASLKSNLLLDIHLHDHVDTLYDQIRKKALIQYTLPFVSVDLSRMADAFKTSVSGLEKELEALITDNQIQARIDSHNKILYARHADQRNATFQKVLQMGNEFDRDVRAMLLRANLLKHEYHARSARKL</sequence>
<dbReference type="EMBL" id="L26498">
    <property type="protein sequence ID" value="AAA32792.1"/>
    <property type="molecule type" value="Genomic_DNA"/>
</dbReference>
<dbReference type="EMBL" id="AF395057">
    <property type="protein sequence ID" value="AAL58100.1"/>
    <property type="molecule type" value="mRNA"/>
</dbReference>
<dbReference type="EMBL" id="AL137898">
    <property type="protein sequence ID" value="CAB71044.1"/>
    <property type="molecule type" value="Genomic_DNA"/>
</dbReference>
<dbReference type="EMBL" id="CP002686">
    <property type="protein sequence ID" value="AEE80160.1"/>
    <property type="molecule type" value="Genomic_DNA"/>
</dbReference>
<dbReference type="EMBL" id="AF360295">
    <property type="protein sequence ID" value="AAK26005.1"/>
    <property type="molecule type" value="mRNA"/>
</dbReference>
<dbReference type="EMBL" id="AK117532">
    <property type="protein sequence ID" value="BAC42193.1"/>
    <property type="molecule type" value="mRNA"/>
</dbReference>
<dbReference type="EMBL" id="AY051056">
    <property type="protein sequence ID" value="AAK93733.1"/>
    <property type="molecule type" value="mRNA"/>
</dbReference>
<dbReference type="EMBL" id="AJ243015">
    <property type="protein sequence ID" value="CAB91509.1"/>
    <property type="molecule type" value="Genomic_DNA"/>
</dbReference>
<dbReference type="PIR" id="T47906">
    <property type="entry name" value="T47906"/>
</dbReference>
<dbReference type="RefSeq" id="NP_567109.1">
    <property type="nucleotide sequence ID" value="NM_115978.4"/>
</dbReference>
<dbReference type="PDB" id="4LCT">
    <property type="method" value="X-ray"/>
    <property type="resolution" value="2.70 A"/>
    <property type="chains" value="A/B/C/D=32-379"/>
</dbReference>
<dbReference type="PDBsum" id="4LCT"/>
<dbReference type="SMR" id="P45432"/>
<dbReference type="BioGRID" id="10600">
    <property type="interactions" value="21"/>
</dbReference>
<dbReference type="FunCoup" id="P45432">
    <property type="interactions" value="4600"/>
</dbReference>
<dbReference type="IntAct" id="P45432">
    <property type="interactions" value="12"/>
</dbReference>
<dbReference type="STRING" id="3702.P45432"/>
<dbReference type="PaxDb" id="3702-AT3G61140.1"/>
<dbReference type="ProteomicsDB" id="224427"/>
<dbReference type="EnsemblPlants" id="AT3G61140.1">
    <property type="protein sequence ID" value="AT3G61140.1"/>
    <property type="gene ID" value="AT3G61140"/>
</dbReference>
<dbReference type="GeneID" id="825286"/>
<dbReference type="Gramene" id="AT3G61140.1">
    <property type="protein sequence ID" value="AT3G61140.1"/>
    <property type="gene ID" value="AT3G61140"/>
</dbReference>
<dbReference type="KEGG" id="ath:AT3G61140"/>
<dbReference type="Araport" id="AT3G61140"/>
<dbReference type="TAIR" id="AT3G61140">
    <property type="gene designation" value="FUS6"/>
</dbReference>
<dbReference type="eggNOG" id="KOG0686">
    <property type="taxonomic scope" value="Eukaryota"/>
</dbReference>
<dbReference type="HOGENOM" id="CLU_022348_1_0_1"/>
<dbReference type="InParanoid" id="P45432"/>
<dbReference type="OMA" id="IYLQNWA"/>
<dbReference type="OrthoDB" id="422427at2759"/>
<dbReference type="PhylomeDB" id="P45432"/>
<dbReference type="EvolutionaryTrace" id="P45432"/>
<dbReference type="PRO" id="PR:P45432"/>
<dbReference type="Proteomes" id="UP000006548">
    <property type="component" value="Chromosome 3"/>
</dbReference>
<dbReference type="ExpressionAtlas" id="P45432">
    <property type="expression patterns" value="baseline and differential"/>
</dbReference>
<dbReference type="GO" id="GO:0008180">
    <property type="term" value="C:COP9 signalosome"/>
    <property type="evidence" value="ECO:0000314"/>
    <property type="project" value="TAIR"/>
</dbReference>
<dbReference type="GO" id="GO:0005737">
    <property type="term" value="C:cytoplasm"/>
    <property type="evidence" value="ECO:0007669"/>
    <property type="project" value="UniProtKB-SubCell"/>
</dbReference>
<dbReference type="GO" id="GO:0009793">
    <property type="term" value="P:embryo development ending in seed dormancy"/>
    <property type="evidence" value="ECO:0000315"/>
    <property type="project" value="TAIR"/>
</dbReference>
<dbReference type="GO" id="GO:0006972">
    <property type="term" value="P:hyperosmotic response"/>
    <property type="evidence" value="ECO:0000270"/>
    <property type="project" value="TAIR"/>
</dbReference>
<dbReference type="GO" id="GO:0000338">
    <property type="term" value="P:protein deneddylation"/>
    <property type="evidence" value="ECO:0000315"/>
    <property type="project" value="TAIR"/>
</dbReference>
<dbReference type="GO" id="GO:0065003">
    <property type="term" value="P:protein-containing complex assembly"/>
    <property type="evidence" value="ECO:0000314"/>
    <property type="project" value="TAIR"/>
</dbReference>
<dbReference type="GO" id="GO:0009585">
    <property type="term" value="P:red, far-red light phototransduction"/>
    <property type="evidence" value="ECO:0007669"/>
    <property type="project" value="UniProtKB-KW"/>
</dbReference>
<dbReference type="GO" id="GO:0009646">
    <property type="term" value="P:response to absence of light"/>
    <property type="evidence" value="ECO:0000270"/>
    <property type="project" value="TAIR"/>
</dbReference>
<dbReference type="GO" id="GO:0009651">
    <property type="term" value="P:response to salt stress"/>
    <property type="evidence" value="ECO:0000270"/>
    <property type="project" value="TAIR"/>
</dbReference>
<dbReference type="FunFam" id="1.25.40.570:FF:000014">
    <property type="entry name" value="COP9 signalosome complex subunit 1"/>
    <property type="match status" value="1"/>
</dbReference>
<dbReference type="Gene3D" id="1.25.40.570">
    <property type="match status" value="1"/>
</dbReference>
<dbReference type="InterPro" id="IPR048624">
    <property type="entry name" value="CSN1_C"/>
</dbReference>
<dbReference type="InterPro" id="IPR000717">
    <property type="entry name" value="PCI_dom"/>
</dbReference>
<dbReference type="InterPro" id="IPR019585">
    <property type="entry name" value="Rpn7/CSN1"/>
</dbReference>
<dbReference type="InterPro" id="IPR045135">
    <property type="entry name" value="Rpn7_N"/>
</dbReference>
<dbReference type="InterPro" id="IPR036390">
    <property type="entry name" value="WH_DNA-bd_sf"/>
</dbReference>
<dbReference type="PANTHER" id="PTHR14145">
    <property type="entry name" value="26S PROTESOME SUBUNIT 6"/>
    <property type="match status" value="1"/>
</dbReference>
<dbReference type="PANTHER" id="PTHR14145:SF2">
    <property type="entry name" value="COP9 SIGNALOSOME COMPLEX SUBUNIT 1"/>
    <property type="match status" value="1"/>
</dbReference>
<dbReference type="Pfam" id="PF21151">
    <property type="entry name" value="CSN1_C"/>
    <property type="match status" value="1"/>
</dbReference>
<dbReference type="Pfam" id="PF01399">
    <property type="entry name" value="PCI"/>
    <property type="match status" value="1"/>
</dbReference>
<dbReference type="Pfam" id="PF10602">
    <property type="entry name" value="RPN7"/>
    <property type="match status" value="1"/>
</dbReference>
<dbReference type="SMART" id="SM00088">
    <property type="entry name" value="PINT"/>
    <property type="match status" value="1"/>
</dbReference>
<dbReference type="SUPFAM" id="SSF46785">
    <property type="entry name" value="Winged helix' DNA-binding domain"/>
    <property type="match status" value="1"/>
</dbReference>
<dbReference type="PROSITE" id="PS50250">
    <property type="entry name" value="PCI"/>
    <property type="match status" value="1"/>
</dbReference>
<accession>P45432</accession>
<accession>Q8GYL2</accession>
<accession>Q9C5F0</accession>
<accession>Q9M2E9</accession>
<accession>Q9M4G0</accession>
<gene>
    <name type="primary">CSN1</name>
    <name type="synonym">COP11</name>
    <name type="synonym">FUS6</name>
    <name type="ordered locus">At3g61140</name>
    <name type="ORF">T20K12.40</name>
</gene>
<proteinExistence type="evidence at protein level"/>
<organism>
    <name type="scientific">Arabidopsis thaliana</name>
    <name type="common">Mouse-ear cress</name>
    <dbReference type="NCBI Taxonomy" id="3702"/>
    <lineage>
        <taxon>Eukaryota</taxon>
        <taxon>Viridiplantae</taxon>
        <taxon>Streptophyta</taxon>
        <taxon>Embryophyta</taxon>
        <taxon>Tracheophyta</taxon>
        <taxon>Spermatophyta</taxon>
        <taxon>Magnoliopsida</taxon>
        <taxon>eudicotyledons</taxon>
        <taxon>Gunneridae</taxon>
        <taxon>Pentapetalae</taxon>
        <taxon>rosids</taxon>
        <taxon>malvids</taxon>
        <taxon>Brassicales</taxon>
        <taxon>Brassicaceae</taxon>
        <taxon>Camelineae</taxon>
        <taxon>Arabidopsis</taxon>
    </lineage>
</organism>
<keyword id="KW-0002">3D-structure</keyword>
<keyword id="KW-0963">Cytoplasm</keyword>
<keyword id="KW-0217">Developmental protein</keyword>
<keyword id="KW-0539">Nucleus</keyword>
<keyword id="KW-0607">Phytochrome signaling pathway</keyword>
<keyword id="KW-1185">Reference proteome</keyword>
<keyword id="KW-0736">Signalosome</keyword>
<comment type="function">
    <text evidence="3 12">Component of the COP9 signalosome complex (CSN), a complex involved in various cellular and developmental processes such as photomorphogenesis and auxin and jasmonate responses. The CSN complex is an essential regulator of the ubiquitin (Ubl) conjugation pathway by mediating the deneddylation of the cullin subunits of SCF-type E3 ligase complexes, leading to decrease the Ubl ligase activity of SCF. It is involved in repression of photomorphogenesis in darkness by regulating the activity of COP1-containing Ubl ligase complexes. The complex is also required for degradation of IAA6 by regulating the activity of the Ubl ligase SCF-TIR complex. In the complex, it plays a central role in CSN assembly.</text>
</comment>
<comment type="subunit">
    <text evidence="4 5 6 7 8 9 10 11 13 14">Component of the CSN complex, probably composed of CSN1, CSN2, CSN3, CSN4, CSN5 (CSN5A or CSN5B), CSN6 (CSN6A or CSN6B), CSN7 and CSN8. Interacts with itself and (via PCI domain) with CSN7 (via PCI domain). In the CSN complex, it probably interacts directly with CSN2, CSN3, CSN4 and CSN5B. Interacts with the 26S proteasome subunit RPN6. Interacts (via N-terminal domain) with TSA1 (via C-terminal domain). Binds to the translation initiation factors TIF3C1, TIF3E1 and TIF3H1 (PubMed:15548739, PubMed:19704582, PubMed:9849901).</text>
</comment>
<comment type="interaction">
    <interactant intactId="EBI-530996">
        <id>P45432</id>
    </interactant>
    <interactant intactId="EBI-531035">
        <id>Q8W207</id>
        <label>CSN2</label>
    </interactant>
    <organismsDiffer>false</organismsDiffer>
    <experiments>4</experiments>
</comment>
<comment type="interaction">
    <interactant intactId="EBI-530996">
        <id>P45432</id>
    </interactant>
    <interactant intactId="EBI-531055">
        <id>Q8W575</id>
        <label>CSN3</label>
    </interactant>
    <organismsDiffer>false</organismsDiffer>
    <experiments>3</experiments>
</comment>
<comment type="interaction">
    <interactant intactId="EBI-530996">
        <id>P45432</id>
    </interactant>
    <interactant intactId="EBI-531074">
        <id>Q8L5U0</id>
        <label>CSN4</label>
    </interactant>
    <organismsDiffer>false</organismsDiffer>
    <experiments>3</experiments>
</comment>
<comment type="interaction">
    <interactant intactId="EBI-530996">
        <id>P45432</id>
    </interactant>
    <interactant intactId="EBI-531132">
        <id>Q8LAZ7</id>
        <label>CSN5A</label>
    </interactant>
    <organismsDiffer>false</organismsDiffer>
    <experiments>3</experiments>
</comment>
<comment type="interaction">
    <interactant intactId="EBI-530996">
        <id>P45432</id>
    </interactant>
    <interactant intactId="EBI-531152">
        <id>Q94JU3</id>
        <label>CSN7</label>
    </interactant>
    <organismsDiffer>false</organismsDiffer>
    <experiments>3</experiments>
</comment>
<comment type="interaction">
    <interactant intactId="EBI-530996">
        <id>P45432</id>
    </interactant>
    <interactant intactId="EBI-530981">
        <id>P43255</id>
        <label>CSN8</label>
    </interactant>
    <organismsDiffer>false</organismsDiffer>
    <experiments>4</experiments>
</comment>
<comment type="subcellular location">
    <subcellularLocation>
        <location>Cytoplasm</location>
    </subcellularLocation>
    <subcellularLocation>
        <location>Nucleus</location>
    </subcellularLocation>
</comment>
<comment type="tissue specificity">
    <text>Expressed in leaves, flowers, immature siliques, and light-grown roots.</text>
</comment>
<comment type="domain">
    <text evidence="5">The PCI domain is necessary and sufficient for the interactions with other CSN subunits of the complex.</text>
</comment>
<comment type="domain">
    <text evidence="5">The N-terminal part (1-211), which is not required for deneddylating activity and CSN complex formation, is nevertheless essential for other aspects of CSN complex function.</text>
</comment>
<comment type="similarity">
    <text evidence="15">Belongs to the CSN1 family.</text>
</comment>
<reference key="1">
    <citation type="journal article" date="1994" name="Plant Cell">
        <title>A FUSCA gene of Arabidopsis encodes a novel protein essential for plant development.</title>
        <authorList>
            <person name="Castle L.A."/>
            <person name="Meinke D.W."/>
        </authorList>
    </citation>
    <scope>NUCLEOTIDE SEQUENCE [GENOMIC DNA]</scope>
    <source>
        <strain>cv. Wassilewskija</strain>
        <tissue>Silique</tissue>
    </source>
</reference>
<reference key="2">
    <citation type="journal article" date="2001" name="EMBO J.">
        <title>Subunit interaction maps for the regulatory particle of the 26S proteasome and the COP9 signalosome.</title>
        <authorList>
            <person name="Fu H."/>
            <person name="Reis N."/>
            <person name="Lee Y."/>
            <person name="Glickman M.H."/>
            <person name="Vierstra R."/>
        </authorList>
    </citation>
    <scope>NUCLEOTIDE SEQUENCE [MRNA]</scope>
    <scope>INTERACTION WITH CSN7</scope>
    <source>
        <strain>cv. Columbia</strain>
    </source>
</reference>
<reference key="3">
    <citation type="journal article" date="2000" name="Nature">
        <title>Sequence and analysis of chromosome 3 of the plant Arabidopsis thaliana.</title>
        <authorList>
            <person name="Salanoubat M."/>
            <person name="Lemcke K."/>
            <person name="Rieger M."/>
            <person name="Ansorge W."/>
            <person name="Unseld M."/>
            <person name="Fartmann B."/>
            <person name="Valle G."/>
            <person name="Bloecker H."/>
            <person name="Perez-Alonso M."/>
            <person name="Obermaier B."/>
            <person name="Delseny M."/>
            <person name="Boutry M."/>
            <person name="Grivell L.A."/>
            <person name="Mache R."/>
            <person name="Puigdomenech P."/>
            <person name="De Simone V."/>
            <person name="Choisne N."/>
            <person name="Artiguenave F."/>
            <person name="Robert C."/>
            <person name="Brottier P."/>
            <person name="Wincker P."/>
            <person name="Cattolico L."/>
            <person name="Weissenbach J."/>
            <person name="Saurin W."/>
            <person name="Quetier F."/>
            <person name="Schaefer M."/>
            <person name="Mueller-Auer S."/>
            <person name="Gabel C."/>
            <person name="Fuchs M."/>
            <person name="Benes V."/>
            <person name="Wurmbach E."/>
            <person name="Drzonek H."/>
            <person name="Erfle H."/>
            <person name="Jordan N."/>
            <person name="Bangert S."/>
            <person name="Wiedelmann R."/>
            <person name="Kranz H."/>
            <person name="Voss H."/>
            <person name="Holland R."/>
            <person name="Brandt P."/>
            <person name="Nyakatura G."/>
            <person name="Vezzi A."/>
            <person name="D'Angelo M."/>
            <person name="Pallavicini A."/>
            <person name="Toppo S."/>
            <person name="Simionati B."/>
            <person name="Conrad A."/>
            <person name="Hornischer K."/>
            <person name="Kauer G."/>
            <person name="Loehnert T.-H."/>
            <person name="Nordsiek G."/>
            <person name="Reichelt J."/>
            <person name="Scharfe M."/>
            <person name="Schoen O."/>
            <person name="Bargues M."/>
            <person name="Terol J."/>
            <person name="Climent J."/>
            <person name="Navarro P."/>
            <person name="Collado C."/>
            <person name="Perez-Perez A."/>
            <person name="Ottenwaelder B."/>
            <person name="Duchemin D."/>
            <person name="Cooke R."/>
            <person name="Laudie M."/>
            <person name="Berger-Llauro C."/>
            <person name="Purnelle B."/>
            <person name="Masuy D."/>
            <person name="de Haan M."/>
            <person name="Maarse A.C."/>
            <person name="Alcaraz J.-P."/>
            <person name="Cottet A."/>
            <person name="Casacuberta E."/>
            <person name="Monfort A."/>
            <person name="Argiriou A."/>
            <person name="Flores M."/>
            <person name="Liguori R."/>
            <person name="Vitale D."/>
            <person name="Mannhaupt G."/>
            <person name="Haase D."/>
            <person name="Schoof H."/>
            <person name="Rudd S."/>
            <person name="Zaccaria P."/>
            <person name="Mewes H.-W."/>
            <person name="Mayer K.F.X."/>
            <person name="Kaul S."/>
            <person name="Town C.D."/>
            <person name="Koo H.L."/>
            <person name="Tallon L.J."/>
            <person name="Jenkins J."/>
            <person name="Rooney T."/>
            <person name="Rizzo M."/>
            <person name="Walts A."/>
            <person name="Utterback T."/>
            <person name="Fujii C.Y."/>
            <person name="Shea T.P."/>
            <person name="Creasy T.H."/>
            <person name="Haas B."/>
            <person name="Maiti R."/>
            <person name="Wu D."/>
            <person name="Peterson J."/>
            <person name="Van Aken S."/>
            <person name="Pai G."/>
            <person name="Militscher J."/>
            <person name="Sellers P."/>
            <person name="Gill J.E."/>
            <person name="Feldblyum T.V."/>
            <person name="Preuss D."/>
            <person name="Lin X."/>
            <person name="Nierman W.C."/>
            <person name="Salzberg S.L."/>
            <person name="White O."/>
            <person name="Venter J.C."/>
            <person name="Fraser C.M."/>
            <person name="Kaneko T."/>
            <person name="Nakamura Y."/>
            <person name="Sato S."/>
            <person name="Kato T."/>
            <person name="Asamizu E."/>
            <person name="Sasamoto S."/>
            <person name="Kimura T."/>
            <person name="Idesawa K."/>
            <person name="Kawashima K."/>
            <person name="Kishida Y."/>
            <person name="Kiyokawa C."/>
            <person name="Kohara M."/>
            <person name="Matsumoto M."/>
            <person name="Matsuno A."/>
            <person name="Muraki A."/>
            <person name="Nakayama S."/>
            <person name="Nakazaki N."/>
            <person name="Shinpo S."/>
            <person name="Takeuchi C."/>
            <person name="Wada T."/>
            <person name="Watanabe A."/>
            <person name="Yamada M."/>
            <person name="Yasuda M."/>
            <person name="Tabata S."/>
        </authorList>
    </citation>
    <scope>NUCLEOTIDE SEQUENCE [LARGE SCALE GENOMIC DNA]</scope>
    <source>
        <strain>cv. Columbia</strain>
    </source>
</reference>
<reference key="4">
    <citation type="journal article" date="2017" name="Plant J.">
        <title>Araport11: a complete reannotation of the Arabidopsis thaliana reference genome.</title>
        <authorList>
            <person name="Cheng C.Y."/>
            <person name="Krishnakumar V."/>
            <person name="Chan A.P."/>
            <person name="Thibaud-Nissen F."/>
            <person name="Schobel S."/>
            <person name="Town C.D."/>
        </authorList>
    </citation>
    <scope>GENOME REANNOTATION</scope>
    <source>
        <strain>cv. Columbia</strain>
    </source>
</reference>
<reference key="5">
    <citation type="journal article" date="2002" name="Science">
        <title>Functional annotation of a full-length Arabidopsis cDNA collection.</title>
        <authorList>
            <person name="Seki M."/>
            <person name="Narusaka M."/>
            <person name="Kamiya A."/>
            <person name="Ishida J."/>
            <person name="Satou M."/>
            <person name="Sakurai T."/>
            <person name="Nakajima M."/>
            <person name="Enju A."/>
            <person name="Akiyama K."/>
            <person name="Oono Y."/>
            <person name="Muramatsu M."/>
            <person name="Hayashizaki Y."/>
            <person name="Kawai J."/>
            <person name="Carninci P."/>
            <person name="Itoh M."/>
            <person name="Ishii Y."/>
            <person name="Arakawa T."/>
            <person name="Shibata K."/>
            <person name="Shinagawa A."/>
            <person name="Shinozaki K."/>
        </authorList>
    </citation>
    <scope>NUCLEOTIDE SEQUENCE [LARGE SCALE MRNA]</scope>
    <source>
        <strain>cv. Columbia</strain>
    </source>
</reference>
<reference key="6">
    <citation type="journal article" date="2003" name="Science">
        <title>Empirical analysis of transcriptional activity in the Arabidopsis genome.</title>
        <authorList>
            <person name="Yamada K."/>
            <person name="Lim J."/>
            <person name="Dale J.M."/>
            <person name="Chen H."/>
            <person name="Shinn P."/>
            <person name="Palm C.J."/>
            <person name="Southwick A.M."/>
            <person name="Wu H.C."/>
            <person name="Kim C.J."/>
            <person name="Nguyen M."/>
            <person name="Pham P.K."/>
            <person name="Cheuk R.F."/>
            <person name="Karlin-Newmann G."/>
            <person name="Liu S.X."/>
            <person name="Lam B."/>
            <person name="Sakano H."/>
            <person name="Wu T."/>
            <person name="Yu G."/>
            <person name="Miranda M."/>
            <person name="Quach H.L."/>
            <person name="Tripp M."/>
            <person name="Chang C.H."/>
            <person name="Lee J.M."/>
            <person name="Toriumi M.J."/>
            <person name="Chan M.M."/>
            <person name="Tang C.C."/>
            <person name="Onodera C.S."/>
            <person name="Deng J.M."/>
            <person name="Akiyama K."/>
            <person name="Ansari Y."/>
            <person name="Arakawa T."/>
            <person name="Banh J."/>
            <person name="Banno F."/>
            <person name="Bowser L."/>
            <person name="Brooks S.Y."/>
            <person name="Carninci P."/>
            <person name="Chao Q."/>
            <person name="Choy N."/>
            <person name="Enju A."/>
            <person name="Goldsmith A.D."/>
            <person name="Gurjal M."/>
            <person name="Hansen N.F."/>
            <person name="Hayashizaki Y."/>
            <person name="Johnson-Hopson C."/>
            <person name="Hsuan V.W."/>
            <person name="Iida K."/>
            <person name="Karnes M."/>
            <person name="Khan S."/>
            <person name="Koesema E."/>
            <person name="Ishida J."/>
            <person name="Jiang P.X."/>
            <person name="Jones T."/>
            <person name="Kawai J."/>
            <person name="Kamiya A."/>
            <person name="Meyers C."/>
            <person name="Nakajima M."/>
            <person name="Narusaka M."/>
            <person name="Seki M."/>
            <person name="Sakurai T."/>
            <person name="Satou M."/>
            <person name="Tamse R."/>
            <person name="Vaysberg M."/>
            <person name="Wallender E.K."/>
            <person name="Wong C."/>
            <person name="Yamamura Y."/>
            <person name="Yuan S."/>
            <person name="Shinozaki K."/>
            <person name="Davis R.W."/>
            <person name="Theologis A."/>
            <person name="Ecker J.R."/>
        </authorList>
    </citation>
    <scope>NUCLEOTIDE SEQUENCE [LARGE SCALE MRNA]</scope>
    <source>
        <strain>cv. Columbia</strain>
    </source>
</reference>
<reference key="7">
    <citation type="journal article" date="2000" name="Plant Mol. Biol.">
        <title>Organization and structural evolution of four multigene families in Arabidopsis thaliana: AtLCAD, AtLGT, AtMYST and AtHD-GL2.</title>
        <authorList>
            <person name="Tavares R."/>
            <person name="Aubourg S."/>
            <person name="Lecharny A."/>
            <person name="Kreis M."/>
        </authorList>
    </citation>
    <scope>NUCLEOTIDE SEQUENCE [GENOMIC DNA] OF 1-130</scope>
</reference>
<reference key="8">
    <citation type="journal article" date="1996" name="Cell">
        <title>The COP9 complex, a novel multisubunit nuclear regulator involved in light control of a plant developmental switch.</title>
        <authorList>
            <person name="Chamovitz D.A."/>
            <person name="Wei N."/>
            <person name="Osterlund M.T."/>
            <person name="von Arnim A.G."/>
            <person name="Staub J.M."/>
            <person name="Matsui M."/>
            <person name="Deng X.-W."/>
        </authorList>
    </citation>
    <scope>FUNCTION</scope>
    <scope>SUBCELLULAR LOCATION</scope>
    <scope>COMPONENT OF THE CSN COMPLEX WITH CSN8</scope>
</reference>
<reference key="9">
    <citation type="journal article" date="1996" name="Plant Cell">
        <title>Evidence for FUS6 as a component of the nuclear-localized COP9 complex in Arabidopsis.</title>
        <authorList>
            <person name="Staub J.M."/>
            <person name="Wei N."/>
            <person name="Deng X.-W."/>
        </authorList>
    </citation>
    <scope>SUBCELLULAR LOCATION</scope>
    <scope>COMPONENT OF THE CSN COMPLEX WITH CSN8</scope>
</reference>
<reference key="10">
    <citation type="journal article" date="1998" name="FEBS Lett.">
        <title>The Arabidopsis homologue of an eIF3 complex subunit associates with the COP9 complex.</title>
        <authorList>
            <person name="Karniol B."/>
            <person name="Yahalom A."/>
            <person name="Kwok S."/>
            <person name="Tsuge T."/>
            <person name="Matsui M."/>
            <person name="Deng X.-W."/>
            <person name="Chamovitz D.A."/>
        </authorList>
    </citation>
    <scope>INTERACTION WITH TIF3C1</scope>
</reference>
<reference key="11">
    <citation type="journal article" date="1999" name="J. Mol. Biol.">
        <title>Characterization of two subunits of Arabidopsis 19S proteasome regulatory complex and its possible interaction with the COP9 complex.</title>
        <authorList>
            <person name="Kwok S.F."/>
            <person name="Staub J.M."/>
            <person name="Deng X.-W."/>
        </authorList>
    </citation>
    <scope>INTERACTION WITH RPN6</scope>
</reference>
<reference key="12">
    <citation type="journal article" date="2001" name="Science">
        <title>Interactions of the COP9 signalosome with the E3 ubiquitin ligase SCF(TIR1) in mediating auxin response.</title>
        <authorList>
            <person name="Schwechheimer C."/>
            <person name="Serino G."/>
            <person name="Callis J."/>
            <person name="Crosby W.L."/>
            <person name="Lyapina S."/>
            <person name="Deshaies R.J."/>
            <person name="Gray W.M."/>
            <person name="Estelle M."/>
            <person name="Deng X.-W."/>
        </authorList>
    </citation>
    <scope>FUNCTION</scope>
</reference>
<reference key="13">
    <citation type="journal article" date="2002" name="Mol. Biol. Cell">
        <title>CSN1 N-terminal-dependent activity is required for Arabidopsis development but not for Rub1/Nedd8 deconjugation of cullins: a structure-function study of CSN1 subunit of COP9 signalosome.</title>
        <authorList>
            <person name="Wang X."/>
            <person name="Kang D."/>
            <person name="Feng S."/>
            <person name="Serino G."/>
            <person name="Schwechheimer C."/>
            <person name="Wei N."/>
        </authorList>
    </citation>
    <scope>DOMAIN</scope>
    <scope>INTERACTION WITH CSN2 AND CSN4</scope>
    <scope>MUTANT FUS6-T236</scope>
</reference>
<reference key="14">
    <citation type="journal article" date="2003" name="Plant Cell">
        <title>Characterization of the last subunit of the Arabidopsis COP9 signalosome: implications for the overall structure and origin of the complex.</title>
        <authorList>
            <person name="Serino G."/>
            <person name="Su H."/>
            <person name="Peng Z."/>
            <person name="Tsuge T."/>
            <person name="Wei N."/>
            <person name="Gu H."/>
            <person name="Deng X.-W."/>
        </authorList>
    </citation>
    <scope>INTERACTION WITH CSN2; CSN3; CSN4 AND CSN7</scope>
</reference>
<reference key="15">
    <citation type="journal article" date="2004" name="Plant Cell">
        <title>Translational regulation via 5' mRNA leader sequences revealed by mutational analysis of the Arabidopsis translation initiation factor subunit eIF3h.</title>
        <authorList>
            <person name="Kim T.-H."/>
            <person name="Kim B.-H."/>
            <person name="Yahalom A."/>
            <person name="Chamovitz D.A."/>
            <person name="von Arnim A.G."/>
        </authorList>
    </citation>
    <scope>INTERACTION WITH TIF3H1</scope>
</reference>
<reference key="16">
    <citation type="journal article" date="2008" name="Plant Cell">
        <title>The Arabidopsis COP9 signalosome subunit 7 is a model PCI domain protein with subdomains involved in COP9 signalosome assembly.</title>
        <authorList>
            <person name="Dessau M."/>
            <person name="Halimi Y."/>
            <person name="Erez T."/>
            <person name="Chomsky-Hecht O."/>
            <person name="Chamovitz D.A."/>
            <person name="Hirsch J.A."/>
        </authorList>
    </citation>
    <scope>INTERACTION WITH CSN7</scope>
</reference>
<reference key="17">
    <citation type="journal article" date="2008" name="Plant Signal. Behav.">
        <title>Arabidopsis eIF3e interacts with subunits of the ribosome, Cop9 signalosome and proteasome.</title>
        <authorList>
            <person name="Paz-Aviram T."/>
            <person name="Yahalom A."/>
            <person name="Chamovitz D.A."/>
        </authorList>
    </citation>
    <scope>INTERACTION WITH TIF3E1</scope>
</reference>
<reference key="18">
    <citation type="journal article" date="2011" name="J. Genet. Genomics">
        <title>TSA1 interacts with CSN1/CSN and may be functionally involved in Arabidopsis seedling development in darkness.</title>
        <authorList>
            <person name="Li W."/>
            <person name="Zang B."/>
            <person name="Liu C."/>
            <person name="Lu L."/>
            <person name="Wei N."/>
            <person name="Cao K."/>
            <person name="Deng X.W."/>
            <person name="Wang X."/>
        </authorList>
    </citation>
    <scope>INTERACTION WITH TSA1</scope>
</reference>
<reference key="19">
    <citation type="journal article" date="2013" name="Proc. Natl. Acad. Sci. U.S.A.">
        <title>Crystal structure and versatile functional roles of the COP9 signalosome subunit 1.</title>
        <authorList>
            <person name="Lee J.H."/>
            <person name="Yi L."/>
            <person name="Li J."/>
            <person name="Schweitzer K."/>
            <person name="Borgmann M."/>
            <person name="Naumann M."/>
            <person name="Wu H."/>
        </authorList>
    </citation>
    <scope>X-RAY CRYSTALLOGRAPHY (2.70 ANGSTROMS) OF 32-379</scope>
    <scope>INTERACTION WITH CSN7</scope>
    <scope>MUTAGENESIS OF PHE-350; MET-358; LEU-373; ILE-377; ARG-385; ASP-387 AND ASN-390</scope>
</reference>
<name>CSN1_ARATH</name>